<proteinExistence type="evidence at protein level"/>
<comment type="function">
    <text evidence="6">Self-sufficient cytochrome P450 monooxygenase that catalyzes the regioselective in-chain hydroxylation of alkanes, fatty alcohols, and fatty acids (PubMed:36607403). Preferentially hydroxylates 1-dodecanol at C3 and C4 (positions omega-8 and omega-9) (PubMed:36607403). It is very likely that CYP505U2 prefers dodecanol, and probably other fatty alcohols, over fatty acids as substrates (PubMed:36607403). Does not show any significant activity toward tetradecanoic acid (PubMed:36607403).</text>
</comment>
<comment type="catalytic activity">
    <reaction evidence="6">
        <text>2 oxidized [cytochrome P450] + NADPH = 2 reduced [cytochrome P450] + NADP(+) + H(+)</text>
        <dbReference type="Rhea" id="RHEA:24040"/>
        <dbReference type="Rhea" id="RHEA-COMP:14627"/>
        <dbReference type="Rhea" id="RHEA-COMP:14628"/>
        <dbReference type="ChEBI" id="CHEBI:15378"/>
        <dbReference type="ChEBI" id="CHEBI:55376"/>
        <dbReference type="ChEBI" id="CHEBI:57783"/>
        <dbReference type="ChEBI" id="CHEBI:58349"/>
        <dbReference type="ChEBI" id="CHEBI:60344"/>
        <dbReference type="EC" id="1.6.2.4"/>
    </reaction>
</comment>
<comment type="catalytic activity">
    <reaction evidence="6">
        <text>an organic molecule + reduced [NADPH--hemoprotein reductase] + O2 = an alcohol + oxidized [NADPH--hemoprotein reductase] + H2O + H(+)</text>
        <dbReference type="Rhea" id="RHEA:17149"/>
        <dbReference type="Rhea" id="RHEA-COMP:11964"/>
        <dbReference type="Rhea" id="RHEA-COMP:11965"/>
        <dbReference type="ChEBI" id="CHEBI:15377"/>
        <dbReference type="ChEBI" id="CHEBI:15378"/>
        <dbReference type="ChEBI" id="CHEBI:15379"/>
        <dbReference type="ChEBI" id="CHEBI:30879"/>
        <dbReference type="ChEBI" id="CHEBI:57618"/>
        <dbReference type="ChEBI" id="CHEBI:58210"/>
        <dbReference type="ChEBI" id="CHEBI:142491"/>
        <dbReference type="EC" id="1.14.14.1"/>
    </reaction>
</comment>
<comment type="catalytic activity">
    <reaction evidence="6">
        <text>dodecanoate + reduced [NADPH--hemoprotein reductase] + O2 = 3-hydroxydodecanoate + oxidized [NADPH--hemoprotein reductase] + H2O + H(+)</text>
        <dbReference type="Rhea" id="RHEA:76719"/>
        <dbReference type="Rhea" id="RHEA-COMP:11964"/>
        <dbReference type="Rhea" id="RHEA-COMP:11965"/>
        <dbReference type="ChEBI" id="CHEBI:15377"/>
        <dbReference type="ChEBI" id="CHEBI:15378"/>
        <dbReference type="ChEBI" id="CHEBI:15379"/>
        <dbReference type="ChEBI" id="CHEBI:18262"/>
        <dbReference type="ChEBI" id="CHEBI:57618"/>
        <dbReference type="ChEBI" id="CHEBI:58210"/>
        <dbReference type="ChEBI" id="CHEBI:76616"/>
    </reaction>
    <physiologicalReaction direction="left-to-right" evidence="6">
        <dbReference type="Rhea" id="RHEA:76720"/>
    </physiologicalReaction>
</comment>
<comment type="catalytic activity">
    <reaction evidence="6">
        <text>dodecanoate + reduced [NADPH--hemoprotein reductase] + O2 = 7-hydroxydodecanoate + oxidized [NADPH--hemoprotein reductase] + H2O + H(+)</text>
        <dbReference type="Rhea" id="RHEA:45084"/>
        <dbReference type="Rhea" id="RHEA-COMP:11964"/>
        <dbReference type="Rhea" id="RHEA-COMP:11965"/>
        <dbReference type="ChEBI" id="CHEBI:15377"/>
        <dbReference type="ChEBI" id="CHEBI:15378"/>
        <dbReference type="ChEBI" id="CHEBI:15379"/>
        <dbReference type="ChEBI" id="CHEBI:18262"/>
        <dbReference type="ChEBI" id="CHEBI:57618"/>
        <dbReference type="ChEBI" id="CHEBI:58210"/>
        <dbReference type="ChEBI" id="CHEBI:84921"/>
        <dbReference type="EC" id="1.14.14.130"/>
    </reaction>
    <physiologicalReaction direction="left-to-right" evidence="6">
        <dbReference type="Rhea" id="RHEA:45085"/>
    </physiologicalReaction>
</comment>
<comment type="catalytic activity">
    <reaction evidence="6">
        <text>dodecan-1-ol + reduced [NADPH--hemoprotein reductase] + O2 = 1,4-dodecanediol + oxidized [NADPH--hemoprotein reductase] + H2O + H(+)</text>
        <dbReference type="Rhea" id="RHEA:76763"/>
        <dbReference type="Rhea" id="RHEA-COMP:11964"/>
        <dbReference type="Rhea" id="RHEA-COMP:11965"/>
        <dbReference type="ChEBI" id="CHEBI:15377"/>
        <dbReference type="ChEBI" id="CHEBI:15378"/>
        <dbReference type="ChEBI" id="CHEBI:15379"/>
        <dbReference type="ChEBI" id="CHEBI:28878"/>
        <dbReference type="ChEBI" id="CHEBI:57618"/>
        <dbReference type="ChEBI" id="CHEBI:58210"/>
        <dbReference type="ChEBI" id="CHEBI:195422"/>
    </reaction>
    <physiologicalReaction direction="left-to-right" evidence="6">
        <dbReference type="Rhea" id="RHEA:76764"/>
    </physiologicalReaction>
</comment>
<comment type="catalytic activity">
    <reaction evidence="6">
        <text>dodecan-1-ol + reduced [NADPH--hemoprotein reductase] + O2 = 1,3-dodecanediol + oxidized [NADPH--hemoprotein reductase] + H2O + H(+)</text>
        <dbReference type="Rhea" id="RHEA:76771"/>
        <dbReference type="Rhea" id="RHEA-COMP:11964"/>
        <dbReference type="Rhea" id="RHEA-COMP:11965"/>
        <dbReference type="ChEBI" id="CHEBI:15377"/>
        <dbReference type="ChEBI" id="CHEBI:15378"/>
        <dbReference type="ChEBI" id="CHEBI:15379"/>
        <dbReference type="ChEBI" id="CHEBI:28878"/>
        <dbReference type="ChEBI" id="CHEBI:57618"/>
        <dbReference type="ChEBI" id="CHEBI:58210"/>
        <dbReference type="ChEBI" id="CHEBI:195421"/>
    </reaction>
    <physiologicalReaction direction="left-to-right" evidence="6">
        <dbReference type="Rhea" id="RHEA:76772"/>
    </physiologicalReaction>
</comment>
<comment type="cofactor">
    <cofactor evidence="2">
        <name>FAD</name>
        <dbReference type="ChEBI" id="CHEBI:57692"/>
    </cofactor>
    <text evidence="2">Binds 1 FAD.</text>
</comment>
<comment type="cofactor">
    <cofactor evidence="2">
        <name>FMN</name>
        <dbReference type="ChEBI" id="CHEBI:58210"/>
    </cofactor>
    <text evidence="2">Binds 1 FMN.</text>
</comment>
<comment type="cofactor">
    <cofactor evidence="2">
        <name>heme</name>
        <dbReference type="ChEBI" id="CHEBI:30413"/>
    </cofactor>
</comment>
<comment type="similarity">
    <text evidence="8">In the N-terminal section; belongs to the cytochrome P450 family.</text>
</comment>
<feature type="chain" id="PRO_0000459043" description="Self-sufficient cytochrome P450 monooxygenase CYP505U2">
    <location>
        <begin position="1"/>
        <end position="1068"/>
    </location>
</feature>
<feature type="domain" description="Flavodoxin-like" evidence="3">
    <location>
        <begin position="505"/>
        <end position="646"/>
    </location>
</feature>
<feature type="domain" description="FAD-binding FR-type" evidence="4">
    <location>
        <begin position="679"/>
        <end position="909"/>
    </location>
</feature>
<feature type="region of interest" description="Disordered" evidence="5">
    <location>
        <begin position="464"/>
        <end position="498"/>
    </location>
</feature>
<feature type="compositionally biased region" description="Polar residues" evidence="5">
    <location>
        <begin position="472"/>
        <end position="498"/>
    </location>
</feature>
<feature type="binding site" description="axial binding residue" evidence="1">
    <location>
        <position position="408"/>
    </location>
    <ligand>
        <name>heme</name>
        <dbReference type="ChEBI" id="CHEBI:30413"/>
    </ligand>
    <ligandPart>
        <name>Fe</name>
        <dbReference type="ChEBI" id="CHEBI:18248"/>
    </ligandPart>
</feature>
<feature type="binding site" evidence="3">
    <location>
        <begin position="511"/>
        <end position="515"/>
    </location>
    <ligand>
        <name>FMN</name>
        <dbReference type="ChEBI" id="CHEBI:58210"/>
    </ligand>
</feature>
<feature type="binding site" evidence="3">
    <location>
        <begin position="590"/>
        <end position="622"/>
    </location>
    <ligand>
        <name>FMN</name>
        <dbReference type="ChEBI" id="CHEBI:58210"/>
    </ligand>
</feature>
<organism>
    <name type="scientific">Exserohilum turcicum (strain 28A)</name>
    <name type="common">Northern leaf blight fungus</name>
    <name type="synonym">Setosphaeria turcica</name>
    <dbReference type="NCBI Taxonomy" id="671987"/>
    <lineage>
        <taxon>Eukaryota</taxon>
        <taxon>Fungi</taxon>
        <taxon>Dikarya</taxon>
        <taxon>Ascomycota</taxon>
        <taxon>Pezizomycotina</taxon>
        <taxon>Dothideomycetes</taxon>
        <taxon>Pleosporomycetidae</taxon>
        <taxon>Pleosporales</taxon>
        <taxon>Pleosporineae</taxon>
        <taxon>Pleosporaceae</taxon>
        <taxon>Exserohilum</taxon>
    </lineage>
</organism>
<name>CYPU2_EXST2</name>
<protein>
    <recommendedName>
        <fullName evidence="7">Self-sufficient cytochrome P450 monooxygenase CYP505U2</fullName>
    </recommendedName>
    <alternativeName>
        <fullName evidence="7">Bifunctional cytochrome P450/NADPH--P450 reductase CYP505U2</fullName>
    </alternativeName>
    <domain>
        <recommendedName>
            <fullName evidence="7">Cytochrome P450 monooxygenase</fullName>
            <ecNumber evidence="6">1.14.14.1</ecNumber>
            <ecNumber evidence="6">1.14.14.130</ecNumber>
        </recommendedName>
    </domain>
    <domain>
        <recommendedName>
            <fullName evidence="7">NADPH--cytochrome P450 reductase</fullName>
            <ecNumber evidence="6">1.6.2.4</ecNumber>
        </recommendedName>
    </domain>
</protein>
<dbReference type="EC" id="1.14.14.1" evidence="6"/>
<dbReference type="EC" id="1.14.14.130" evidence="6"/>
<dbReference type="EC" id="1.6.2.4" evidence="6"/>
<dbReference type="EMBL" id="KB908814">
    <property type="protein sequence ID" value="EOA84400.1"/>
    <property type="molecule type" value="Genomic_DNA"/>
</dbReference>
<dbReference type="RefSeq" id="XP_008028698.1">
    <property type="nucleotide sequence ID" value="XM_008030507.1"/>
</dbReference>
<dbReference type="SMR" id="R0IGL9"/>
<dbReference type="STRING" id="671987.R0IGL9"/>
<dbReference type="GeneID" id="19396506"/>
<dbReference type="eggNOG" id="KOG0157">
    <property type="taxonomic scope" value="Eukaryota"/>
</dbReference>
<dbReference type="eggNOG" id="KOG1158">
    <property type="taxonomic scope" value="Eukaryota"/>
</dbReference>
<dbReference type="HOGENOM" id="CLU_001570_7_0_1"/>
<dbReference type="OrthoDB" id="1470350at2759"/>
<dbReference type="Proteomes" id="UP000016935">
    <property type="component" value="Unassembled WGS sequence"/>
</dbReference>
<dbReference type="GO" id="GO:0005829">
    <property type="term" value="C:cytosol"/>
    <property type="evidence" value="ECO:0007669"/>
    <property type="project" value="TreeGrafter"/>
</dbReference>
<dbReference type="GO" id="GO:0070330">
    <property type="term" value="F:aromatase activity"/>
    <property type="evidence" value="ECO:0007669"/>
    <property type="project" value="InterPro"/>
</dbReference>
<dbReference type="GO" id="GO:0052722">
    <property type="term" value="F:fatty acid in-chain hydroxylase activity"/>
    <property type="evidence" value="ECO:0007669"/>
    <property type="project" value="RHEA"/>
</dbReference>
<dbReference type="GO" id="GO:0050660">
    <property type="term" value="F:flavin adenine dinucleotide binding"/>
    <property type="evidence" value="ECO:0007669"/>
    <property type="project" value="TreeGrafter"/>
</dbReference>
<dbReference type="GO" id="GO:0010181">
    <property type="term" value="F:FMN binding"/>
    <property type="evidence" value="ECO:0007669"/>
    <property type="project" value="InterPro"/>
</dbReference>
<dbReference type="GO" id="GO:0020037">
    <property type="term" value="F:heme binding"/>
    <property type="evidence" value="ECO:0007669"/>
    <property type="project" value="InterPro"/>
</dbReference>
<dbReference type="GO" id="GO:0005506">
    <property type="term" value="F:iron ion binding"/>
    <property type="evidence" value="ECO:0007669"/>
    <property type="project" value="InterPro"/>
</dbReference>
<dbReference type="GO" id="GO:0003958">
    <property type="term" value="F:NADPH-hemoprotein reductase activity"/>
    <property type="evidence" value="ECO:0007669"/>
    <property type="project" value="UniProtKB-EC"/>
</dbReference>
<dbReference type="CDD" id="cd06206">
    <property type="entry name" value="bifunctional_CYPOR"/>
    <property type="match status" value="1"/>
</dbReference>
<dbReference type="CDD" id="cd11068">
    <property type="entry name" value="CYP120A1"/>
    <property type="match status" value="1"/>
</dbReference>
<dbReference type="FunFam" id="1.10.630.10:FF:000040">
    <property type="entry name" value="Bifunctional cytochrome P450/NADPH--P450 reductase"/>
    <property type="match status" value="1"/>
</dbReference>
<dbReference type="Gene3D" id="3.40.50.360">
    <property type="match status" value="1"/>
</dbReference>
<dbReference type="Gene3D" id="1.10.630.10">
    <property type="entry name" value="Cytochrome P450"/>
    <property type="match status" value="1"/>
</dbReference>
<dbReference type="Gene3D" id="1.20.990.10">
    <property type="entry name" value="NADPH-cytochrome p450 Reductase, Chain A, domain 3"/>
    <property type="match status" value="1"/>
</dbReference>
<dbReference type="Gene3D" id="3.40.50.80">
    <property type="entry name" value="Nucleotide-binding domain of ferredoxin-NADP reductase (FNR) module"/>
    <property type="match status" value="1"/>
</dbReference>
<dbReference type="Gene3D" id="2.40.30.10">
    <property type="entry name" value="Translation factors"/>
    <property type="match status" value="1"/>
</dbReference>
<dbReference type="InterPro" id="IPR023206">
    <property type="entry name" value="Bifunctional_P450_P450_red"/>
</dbReference>
<dbReference type="InterPro" id="IPR003097">
    <property type="entry name" value="CysJ-like_FAD-binding"/>
</dbReference>
<dbReference type="InterPro" id="IPR001128">
    <property type="entry name" value="Cyt_P450"/>
</dbReference>
<dbReference type="InterPro" id="IPR017972">
    <property type="entry name" value="Cyt_P450_CS"/>
</dbReference>
<dbReference type="InterPro" id="IPR002401">
    <property type="entry name" value="Cyt_P450_E_grp-I"/>
</dbReference>
<dbReference type="InterPro" id="IPR036396">
    <property type="entry name" value="Cyt_P450_sf"/>
</dbReference>
<dbReference type="InterPro" id="IPR017927">
    <property type="entry name" value="FAD-bd_FR_type"/>
</dbReference>
<dbReference type="InterPro" id="IPR008254">
    <property type="entry name" value="Flavodoxin/NO_synth"/>
</dbReference>
<dbReference type="InterPro" id="IPR029039">
    <property type="entry name" value="Flavoprotein-like_sf"/>
</dbReference>
<dbReference type="InterPro" id="IPR039261">
    <property type="entry name" value="FNR_nucleotide-bd"/>
</dbReference>
<dbReference type="InterPro" id="IPR023173">
    <property type="entry name" value="NADPH_Cyt_P450_Rdtase_alpha"/>
</dbReference>
<dbReference type="InterPro" id="IPR001433">
    <property type="entry name" value="OxRdtase_FAD/NAD-bd"/>
</dbReference>
<dbReference type="InterPro" id="IPR017938">
    <property type="entry name" value="Riboflavin_synthase-like_b-brl"/>
</dbReference>
<dbReference type="PANTHER" id="PTHR19384:SF127">
    <property type="entry name" value="BIFUNCTIONAL CYTOCHROME P450_NADPH--P450 REDUCTASE"/>
    <property type="match status" value="1"/>
</dbReference>
<dbReference type="PANTHER" id="PTHR19384">
    <property type="entry name" value="NITRIC OXIDE SYNTHASE-RELATED"/>
    <property type="match status" value="1"/>
</dbReference>
<dbReference type="Pfam" id="PF00667">
    <property type="entry name" value="FAD_binding_1"/>
    <property type="match status" value="1"/>
</dbReference>
<dbReference type="Pfam" id="PF00258">
    <property type="entry name" value="Flavodoxin_1"/>
    <property type="match status" value="1"/>
</dbReference>
<dbReference type="Pfam" id="PF00175">
    <property type="entry name" value="NAD_binding_1"/>
    <property type="match status" value="1"/>
</dbReference>
<dbReference type="Pfam" id="PF00067">
    <property type="entry name" value="p450"/>
    <property type="match status" value="1"/>
</dbReference>
<dbReference type="PIRSF" id="PIRSF000209">
    <property type="entry name" value="Bifunctional_P450_P450R"/>
    <property type="match status" value="1"/>
</dbReference>
<dbReference type="PRINTS" id="PR00463">
    <property type="entry name" value="EP450I"/>
</dbReference>
<dbReference type="PRINTS" id="PR00385">
    <property type="entry name" value="P450"/>
</dbReference>
<dbReference type="SUPFAM" id="SSF48264">
    <property type="entry name" value="Cytochrome P450"/>
    <property type="match status" value="1"/>
</dbReference>
<dbReference type="SUPFAM" id="SSF52343">
    <property type="entry name" value="Ferredoxin reductase-like, C-terminal NADP-linked domain"/>
    <property type="match status" value="1"/>
</dbReference>
<dbReference type="SUPFAM" id="SSF52218">
    <property type="entry name" value="Flavoproteins"/>
    <property type="match status" value="1"/>
</dbReference>
<dbReference type="SUPFAM" id="SSF63380">
    <property type="entry name" value="Riboflavin synthase domain-like"/>
    <property type="match status" value="1"/>
</dbReference>
<dbReference type="PROSITE" id="PS00086">
    <property type="entry name" value="CYTOCHROME_P450"/>
    <property type="match status" value="1"/>
</dbReference>
<dbReference type="PROSITE" id="PS51384">
    <property type="entry name" value="FAD_FR"/>
    <property type="match status" value="1"/>
</dbReference>
<dbReference type="PROSITE" id="PS50902">
    <property type="entry name" value="FLAVODOXIN_LIKE"/>
    <property type="match status" value="1"/>
</dbReference>
<sequence length="1068" mass="118689">MSAPNRQLVPIPGPSALPIVGNTFDLDLDASIQSLVNMFEEYGPVFQLTIAGHKQIFVGNVQLTNEVCDESRFCKIVFSGLELLRSAVHDGLFTAHEGERNWDIAHRILMPVFGPTKIRGMFDQMNDIAQQLCLKWGRYGPTFPIEVTEDFTRLTLDTIALCAMGYRFNSFYRDNMHPFVDRMNRFLKDTNTQSGLPDLFNSLWLHAKKRNKEDIKAMREFSQEVVDQRRQNPVDADDLLNALLHQTDPKTGEGLSDSSIIDNMITFLVAGHETTSGLLSFAFYYMLKNPWAMEKAQQEVDNVIGTERVTVNHLSKLEYLNAILRETLRLMPTAPAFTVGALKDDVIGGKYAVKKGEPINPILQAVHCDKEVYGPDATEWKPERMLEEGFHKLPANSWKPFGNGKRGCIGRAFAWQEALLVVAVLLQSFTFTEDDPSYQLRIREALTIKPDGFKIRATLREHKTTAGMVPESVQSLRQAQKSGKPGNSKSSANESMVGQGNGRSVSIFYGSNSGSCESLANLLASDCAKYGFSVQTTDALDAARENFTSNQIVLIVASTYDGKPADNATEFVNWLKSLTGEPLKGVSYAVFGCGHHDWATTFYKIPILIDELLEQRGAQRVAPRGAANAAVSDLFSDLEKWEESILWPALGLTPALLESQGDTQPRLTISFQRPYTQRKEFLEATVTSASELTTSASPSRKCHMELQLPQDMTYNTGDYLAVLPLNPLSNVQRALSRFHLAWDSVLVIEATGPTQLPTATPISVADLFGAYVELSQPATPRNIRALAGAASDEPTKQALLKLAEDDFATQVRDKRLSVLDLLGQYESVALPVEAFIEMLLPLRPRTYSISSAPQWNPSHASITWSIIDTVSWSGHGRFLGVASNHLYDLSPGAVVRVSVRRSNPAFHPPQDPNSYPIIMIASGSGLAPFRGFIQERALQQKAGMTLAPALLFFGCRGRDDDLHRAEMDDFEKSGVVRVMRAYSKAPNEPDAFGCAYIQERVWSERKEFRELWNRGATVFVCGGTKMSEAIKDVFIKIAYGNAGQDDNKSSRDWFASLDPHRYVAEVFN</sequence>
<gene>
    <name evidence="7" type="primary">CYP505U2</name>
    <name type="ORF">SETTUDRAFT_139399</name>
</gene>
<reference key="1">
    <citation type="journal article" date="2012" name="PLoS Pathog.">
        <title>Diverse lifestyles and strategies of plant pathogenesis encoded in the genomes of eighteen Dothideomycetes fungi.</title>
        <authorList>
            <person name="Ohm R.A."/>
            <person name="Feau N."/>
            <person name="Henrissat B."/>
            <person name="Schoch C.L."/>
            <person name="Horwitz B.A."/>
            <person name="Barry K.W."/>
            <person name="Condon B.J."/>
            <person name="Copeland A.C."/>
            <person name="Dhillon B."/>
            <person name="Glaser F."/>
            <person name="Hesse C.N."/>
            <person name="Kosti I."/>
            <person name="LaButti K."/>
            <person name="Lindquist E.A."/>
            <person name="Lucas S."/>
            <person name="Salamov A.A."/>
            <person name="Bradshaw R.E."/>
            <person name="Ciuffetti L."/>
            <person name="Hamelin R.C."/>
            <person name="Kema G.H.J."/>
            <person name="Lawrence C."/>
            <person name="Scott J.A."/>
            <person name="Spatafora J.W."/>
            <person name="Turgeon B.G."/>
            <person name="de Wit P.J.G.M."/>
            <person name="Zhong S."/>
            <person name="Goodwin S.B."/>
            <person name="Grigoriev I.V."/>
        </authorList>
    </citation>
    <scope>NUCLEOTIDE SEQUENCE [LARGE SCALE GENOMIC DNA]</scope>
    <source>
        <strain>28A</strain>
    </source>
</reference>
<reference key="2">
    <citation type="journal article" date="2013" name="PLoS Genet.">
        <title>Comparative genome structure, secondary metabolite, and effector coding capacity across Cochliobolus pathogens.</title>
        <authorList>
            <person name="Condon B.J."/>
            <person name="Leng Y."/>
            <person name="Wu D."/>
            <person name="Bushley K.E."/>
            <person name="Ohm R.A."/>
            <person name="Otillar R."/>
            <person name="Martin J."/>
            <person name="Schackwitz W."/>
            <person name="Grimwood J."/>
            <person name="MohdZainudin N."/>
            <person name="Xue C."/>
            <person name="Wang R."/>
            <person name="Manning V.A."/>
            <person name="Dhillon B."/>
            <person name="Tu Z.J."/>
            <person name="Steffenson B.J."/>
            <person name="Salamov A."/>
            <person name="Sun H."/>
            <person name="Lowry S."/>
            <person name="LaButti K."/>
            <person name="Han J."/>
            <person name="Copeland A."/>
            <person name="Lindquist E."/>
            <person name="Barry K."/>
            <person name="Schmutz J."/>
            <person name="Baker S.E."/>
            <person name="Ciuffetti L.M."/>
            <person name="Grigoriev I.V."/>
            <person name="Zhong S."/>
            <person name="Turgeon B.G."/>
        </authorList>
    </citation>
    <scope>NUCLEOTIDE SEQUENCE [LARGE SCALE GENOMIC DNA]</scope>
    <source>
        <strain>28A</strain>
    </source>
</reference>
<reference key="3">
    <citation type="journal article" date="2023" name="Appl. Microbiol. Biotechnol.">
        <title>Delineation of the CYP505E subfamily of fungal self-sufficient in-chain hydroxylating cytochrome P450 monooxygenases.</title>
        <authorList>
            <person name="Smit M.S."/>
            <person name="Maseme M.J."/>
            <person name="van Marwijk J."/>
            <person name="Aschenbrenner J.C."/>
            <person name="Opperman D.J."/>
        </authorList>
    </citation>
    <scope>FUNCTION</scope>
    <scope>CATALYTIC ACTIVITY</scope>
</reference>
<accession>R0IGL9</accession>
<keyword id="KW-0249">Electron transport</keyword>
<keyword id="KW-0274">FAD</keyword>
<keyword id="KW-0285">Flavoprotein</keyword>
<keyword id="KW-0288">FMN</keyword>
<keyword id="KW-0349">Heme</keyword>
<keyword id="KW-0408">Iron</keyword>
<keyword id="KW-0479">Metal-binding</keyword>
<keyword id="KW-0503">Monooxygenase</keyword>
<keyword id="KW-0521">NADP</keyword>
<keyword id="KW-0560">Oxidoreductase</keyword>
<keyword id="KW-1185">Reference proteome</keyword>
<keyword id="KW-0813">Transport</keyword>
<evidence type="ECO:0000250" key="1">
    <source>
        <dbReference type="UniProtKB" id="P14779"/>
    </source>
</evidence>
<evidence type="ECO:0000250" key="2">
    <source>
        <dbReference type="UniProtKB" id="Q9Y8G7"/>
    </source>
</evidence>
<evidence type="ECO:0000255" key="3">
    <source>
        <dbReference type="PROSITE-ProRule" id="PRU00088"/>
    </source>
</evidence>
<evidence type="ECO:0000255" key="4">
    <source>
        <dbReference type="PROSITE-ProRule" id="PRU00716"/>
    </source>
</evidence>
<evidence type="ECO:0000256" key="5">
    <source>
        <dbReference type="SAM" id="MobiDB-lite"/>
    </source>
</evidence>
<evidence type="ECO:0000269" key="6">
    <source>
    </source>
</evidence>
<evidence type="ECO:0000303" key="7">
    <source>
    </source>
</evidence>
<evidence type="ECO:0000305" key="8"/>